<sequence>MCASATRPQPSASNNVKKIILPDLVSHCTFKLRHNRHRKQVTTETKKWLFKDGNLLGQKERAYHGLKCGLLTSMCYPDAGYPQLRVVNDFLTYLFHLDNLSDEMDNRGTTTTADEVLNSLYHPHTWRSSARVGKMTRDFYKRLVLTASPGAQQRFIETFDFFFQSVTQQALDRASGVIPDLESYISLRRDTSGCKPCWAMIEYANNLDIPDEVMDHPIIRSLGEATNDLVTWSNDIFSYSVEQSKGHTHNMIPVVMYQEGLDLQAAVDFVGDMCRQSINRFVEEKARLPSWGPKIDQDVAIYVQGLADWIVGSLHWSFETERYFGKSGRQVKASRIVDLLPRQRLP</sequence>
<comment type="function">
    <text evidence="5">Terpene cyclase that catalyzes the cyclization of farnesyl diphosphate (FPP) to various sesquiterpenes, including alpha-muurolene, gamma-muurolene, alpha-selinene, beta-selinene, delta-cadinene, alpha-cadinol and delta-cadinol (PubMed:32233445). Delta-cadinene is the major product of Agr1 (PubMed:32233445).</text>
</comment>
<comment type="catalytic activity">
    <reaction evidence="5">
        <text>(2E,6E)-farnesyl diphosphate = delta-cadinene + diphosphate</text>
        <dbReference type="Rhea" id="RHEA:56556"/>
        <dbReference type="ChEBI" id="CHEBI:33019"/>
        <dbReference type="ChEBI" id="CHEBI:140564"/>
        <dbReference type="ChEBI" id="CHEBI:175763"/>
    </reaction>
    <physiologicalReaction direction="left-to-right" evidence="4">
        <dbReference type="Rhea" id="RHEA:56557"/>
    </physiologicalReaction>
</comment>
<comment type="catalytic activity">
    <reaction evidence="5">
        <text>(2E,6E)-farnesyl diphosphate = alpha-muurolene + diphosphate</text>
        <dbReference type="Rhea" id="RHEA:33103"/>
        <dbReference type="ChEBI" id="CHEBI:33019"/>
        <dbReference type="ChEBI" id="CHEBI:64797"/>
        <dbReference type="ChEBI" id="CHEBI:175763"/>
        <dbReference type="EC" id="4.2.3.125"/>
    </reaction>
    <physiologicalReaction direction="left-to-right" evidence="5">
        <dbReference type="Rhea" id="RHEA:33104"/>
    </physiologicalReaction>
</comment>
<comment type="catalytic activity">
    <reaction evidence="5">
        <text>(2E,6E)-farnesyl diphosphate = gamma-muurolene + diphosphate</text>
        <dbReference type="Rhea" id="RHEA:33107"/>
        <dbReference type="ChEBI" id="CHEBI:33019"/>
        <dbReference type="ChEBI" id="CHEBI:64798"/>
        <dbReference type="ChEBI" id="CHEBI:175763"/>
        <dbReference type="EC" id="4.2.3.126"/>
    </reaction>
    <physiologicalReaction direction="left-to-right" evidence="5">
        <dbReference type="Rhea" id="RHEA:33108"/>
    </physiologicalReaction>
</comment>
<comment type="catalytic activity">
    <reaction evidence="5">
        <text>(2E,6E)-farnesyl diphosphate = alpha-selinene + diphosphate</text>
        <dbReference type="Rhea" id="RHEA:47052"/>
        <dbReference type="ChEBI" id="CHEBI:33019"/>
        <dbReference type="ChEBI" id="CHEBI:59961"/>
        <dbReference type="ChEBI" id="CHEBI:175763"/>
        <dbReference type="EC" id="4.2.3.198"/>
    </reaction>
    <physiologicalReaction direction="left-to-right" evidence="5">
        <dbReference type="Rhea" id="RHEA:47053"/>
    </physiologicalReaction>
</comment>
<comment type="cofactor">
    <cofactor evidence="5">
        <name>Mg(2+)</name>
        <dbReference type="ChEBI" id="CHEBI:18420"/>
    </cofactor>
</comment>
<comment type="domain">
    <text evidence="5">The DDXXD motif is important for the catalytic activity, presumably through binding to Mg(2+).</text>
</comment>
<comment type="similarity">
    <text evidence="7">Belongs to the terpene synthase family.</text>
</comment>
<proteinExistence type="evidence at protein level"/>
<reference key="1">
    <citation type="journal article" date="2020" name="ACS Chem. Biol.">
        <title>Agrocybe aegerita serves as a gateway for identifying sesquiterpene biosynthetic enzymes in higher fungi.</title>
        <authorList>
            <person name="Zhang C."/>
            <person name="Chen X."/>
            <person name="Orban A."/>
            <person name="Shukal S."/>
            <person name="Birk F."/>
            <person name="Too H.P."/>
            <person name="Ruehl M."/>
        </authorList>
    </citation>
    <scope>NUCLEOTIDE SEQUENCE [GENOMIC DNA]</scope>
    <scope>FUNCTION</scope>
    <scope>DOMAIN</scope>
    <scope>CATALYTIC ACTIVITY</scope>
    <source>
        <strain>AAE3_05024</strain>
    </source>
</reference>
<reference key="2">
    <citation type="journal article" date="2018" name="BMC Genomics">
        <title>The genome sequence of the commercially cultivated mushroom Agrocybe aegerita reveals a conserved repertoire of fruiting-related genes and a versatile suite of biopolymer-degrading enzymes.</title>
        <authorList>
            <person name="Gupta D.K."/>
            <person name="Ruehl M."/>
            <person name="Mishra B."/>
            <person name="Kleofas V."/>
            <person name="Hofrichter M."/>
            <person name="Herzog R."/>
            <person name="Pecyna M.J."/>
            <person name="Sharma R."/>
            <person name="Kellner H."/>
            <person name="Hennicke F."/>
            <person name="Thines M."/>
        </authorList>
    </citation>
    <scope>NUCLEOTIDE SEQUENCE [LARGE SCALE GENOMIC DNA]</scope>
    <source>
        <strain>AAE3_05024</strain>
    </source>
</reference>
<gene>
    <name evidence="6" type="primary">Agr1</name>
</gene>
<dbReference type="EC" id="4.2.3.-" evidence="5"/>
<dbReference type="EC" id="4.2.3.125" evidence="5"/>
<dbReference type="EC" id="4.2.3.126" evidence="5"/>
<dbReference type="EC" id="4.2.3.198" evidence="5"/>
<dbReference type="EMBL" id="MN146024">
    <property type="protein sequence ID" value="QGA30877.1"/>
    <property type="molecule type" value="Genomic_DNA"/>
</dbReference>
<dbReference type="SMR" id="A0A5Q0QRJ3"/>
<dbReference type="OrthoDB" id="2861623at2759"/>
<dbReference type="GO" id="GO:0046872">
    <property type="term" value="F:metal ion binding"/>
    <property type="evidence" value="ECO:0007669"/>
    <property type="project" value="UniProtKB-KW"/>
</dbReference>
<dbReference type="GO" id="GO:0010333">
    <property type="term" value="F:terpene synthase activity"/>
    <property type="evidence" value="ECO:0007669"/>
    <property type="project" value="InterPro"/>
</dbReference>
<dbReference type="GO" id="GO:0008299">
    <property type="term" value="P:isoprenoid biosynthetic process"/>
    <property type="evidence" value="ECO:0007669"/>
    <property type="project" value="UniProtKB-ARBA"/>
</dbReference>
<dbReference type="Gene3D" id="1.10.600.10">
    <property type="entry name" value="Farnesyl Diphosphate Synthase"/>
    <property type="match status" value="1"/>
</dbReference>
<dbReference type="InterPro" id="IPR008949">
    <property type="entry name" value="Isoprenoid_synthase_dom_sf"/>
</dbReference>
<dbReference type="InterPro" id="IPR034686">
    <property type="entry name" value="Terpene_cyclase-like_2"/>
</dbReference>
<dbReference type="PANTHER" id="PTHR35201:SF4">
    <property type="entry name" value="BETA-PINACENE SYNTHASE-RELATED"/>
    <property type="match status" value="1"/>
</dbReference>
<dbReference type="PANTHER" id="PTHR35201">
    <property type="entry name" value="TERPENE SYNTHASE"/>
    <property type="match status" value="1"/>
</dbReference>
<dbReference type="Pfam" id="PF19086">
    <property type="entry name" value="Terpene_syn_C_2"/>
    <property type="match status" value="1"/>
</dbReference>
<dbReference type="SFLD" id="SFLDS00005">
    <property type="entry name" value="Isoprenoid_Synthase_Type_I"/>
    <property type="match status" value="1"/>
</dbReference>
<dbReference type="SFLD" id="SFLDG01020">
    <property type="entry name" value="Terpene_Cyclase_Like_2"/>
    <property type="match status" value="1"/>
</dbReference>
<dbReference type="SUPFAM" id="SSF48576">
    <property type="entry name" value="Terpenoid synthases"/>
    <property type="match status" value="1"/>
</dbReference>
<evidence type="ECO:0000250" key="1">
    <source>
        <dbReference type="UniProtKB" id="B5HDJ6"/>
    </source>
</evidence>
<evidence type="ECO:0000250" key="2">
    <source>
        <dbReference type="UniProtKB" id="P0DL13"/>
    </source>
</evidence>
<evidence type="ECO:0000250" key="3">
    <source>
        <dbReference type="UniProtKB" id="Q9UR08"/>
    </source>
</evidence>
<evidence type="ECO:0000269" key="4">
    <source>
    </source>
</evidence>
<evidence type="ECO:0000269" key="5">
    <source>
    </source>
</evidence>
<evidence type="ECO:0000303" key="6">
    <source>
    </source>
</evidence>
<evidence type="ECO:0000305" key="7"/>
<name>AGR1_CYCAE</name>
<keyword id="KW-0456">Lyase</keyword>
<keyword id="KW-0460">Magnesium</keyword>
<keyword id="KW-0479">Metal-binding</keyword>
<protein>
    <recommendedName>
        <fullName evidence="6">Sesquiterpene synthase Agr1</fullName>
        <ecNumber evidence="5">4.2.3.-</ecNumber>
        <ecNumber evidence="5">4.2.3.125</ecNumber>
        <ecNumber evidence="5">4.2.3.126</ecNumber>
        <ecNumber evidence="5">4.2.3.198</ecNumber>
    </recommendedName>
    <alternativeName>
        <fullName evidence="6">Terpene cyclase Agr1</fullName>
    </alternativeName>
</protein>
<organism>
    <name type="scientific">Cyclocybe aegerita</name>
    <name type="common">Black poplar mushroom</name>
    <name type="synonym">Agrocybe aegerita</name>
    <dbReference type="NCBI Taxonomy" id="1973307"/>
    <lineage>
        <taxon>Eukaryota</taxon>
        <taxon>Fungi</taxon>
        <taxon>Dikarya</taxon>
        <taxon>Basidiomycota</taxon>
        <taxon>Agaricomycotina</taxon>
        <taxon>Agaricomycetes</taxon>
        <taxon>Agaricomycetidae</taxon>
        <taxon>Agaricales</taxon>
        <taxon>Agaricineae</taxon>
        <taxon>Bolbitiaceae</taxon>
        <taxon>Cyclocybe</taxon>
    </lineage>
</organism>
<feature type="chain" id="PRO_0000451257" description="Sesquiterpene synthase Agr1">
    <location>
        <begin position="1"/>
        <end position="346"/>
    </location>
</feature>
<feature type="short sequence motif" description="DDXXD motif" evidence="2">
    <location>
        <begin position="98"/>
        <end position="102"/>
    </location>
</feature>
<feature type="binding site" evidence="3">
    <location>
        <position position="98"/>
    </location>
    <ligand>
        <name>Mg(2+)</name>
        <dbReference type="ChEBI" id="CHEBI:18420"/>
        <label>1</label>
    </ligand>
</feature>
<feature type="binding site" evidence="3">
    <location>
        <position position="98"/>
    </location>
    <ligand>
        <name>Mg(2+)</name>
        <dbReference type="ChEBI" id="CHEBI:18420"/>
        <label>2</label>
    </ligand>
</feature>
<feature type="binding site" evidence="3">
    <location>
        <position position="234"/>
    </location>
    <ligand>
        <name>Mg(2+)</name>
        <dbReference type="ChEBI" id="CHEBI:18420"/>
        <label>3</label>
    </ligand>
</feature>
<feature type="binding site" evidence="3">
    <location>
        <position position="238"/>
    </location>
    <ligand>
        <name>Mg(2+)</name>
        <dbReference type="ChEBI" id="CHEBI:18420"/>
        <label>3</label>
    </ligand>
</feature>
<feature type="binding site" evidence="3">
    <location>
        <position position="242"/>
    </location>
    <ligand>
        <name>Mg(2+)</name>
        <dbReference type="ChEBI" id="CHEBI:18420"/>
        <label>3</label>
    </ligand>
</feature>
<feature type="binding site" evidence="3">
    <location>
        <position position="322"/>
    </location>
    <ligand>
        <name>(2E,6E)-farnesyl diphosphate</name>
        <dbReference type="ChEBI" id="CHEBI:175763"/>
    </ligand>
</feature>
<feature type="binding site" evidence="3">
    <location>
        <position position="323"/>
    </location>
    <ligand>
        <name>(2E,6E)-farnesyl diphosphate</name>
        <dbReference type="ChEBI" id="CHEBI:175763"/>
    </ligand>
</feature>
<feature type="site" description="Plays a critical role in the stabilization of intermediate cation" evidence="1">
    <location>
        <position position="95"/>
    </location>
</feature>
<accession>A0A5Q0QRJ3</accession>